<dbReference type="EMBL" id="CP000431">
    <property type="protein sequence ID" value="ABG93796.1"/>
    <property type="molecule type" value="Genomic_DNA"/>
</dbReference>
<dbReference type="RefSeq" id="WP_007298080.1">
    <property type="nucleotide sequence ID" value="NC_008268.1"/>
</dbReference>
<dbReference type="SMR" id="Q0SF90"/>
<dbReference type="KEGG" id="rha:RHA1_ro01989"/>
<dbReference type="eggNOG" id="COG1666">
    <property type="taxonomic scope" value="Bacteria"/>
</dbReference>
<dbReference type="HOGENOM" id="CLU_099839_0_0_11"/>
<dbReference type="Proteomes" id="UP000008710">
    <property type="component" value="Chromosome"/>
</dbReference>
<dbReference type="GO" id="GO:0005829">
    <property type="term" value="C:cytosol"/>
    <property type="evidence" value="ECO:0007669"/>
    <property type="project" value="TreeGrafter"/>
</dbReference>
<dbReference type="GO" id="GO:0000166">
    <property type="term" value="F:nucleotide binding"/>
    <property type="evidence" value="ECO:0007669"/>
    <property type="project" value="TreeGrafter"/>
</dbReference>
<dbReference type="CDD" id="cd11740">
    <property type="entry name" value="YajQ_like"/>
    <property type="match status" value="1"/>
</dbReference>
<dbReference type="FunFam" id="3.30.70.860:FF:000004">
    <property type="entry name" value="UPF0234 protein AWC22_11905"/>
    <property type="match status" value="1"/>
</dbReference>
<dbReference type="Gene3D" id="3.30.70.860">
    <property type="match status" value="1"/>
</dbReference>
<dbReference type="Gene3D" id="3.30.70.990">
    <property type="entry name" value="YajQ-like, domain 2"/>
    <property type="match status" value="1"/>
</dbReference>
<dbReference type="HAMAP" id="MF_00632">
    <property type="entry name" value="YajQ"/>
    <property type="match status" value="1"/>
</dbReference>
<dbReference type="InterPro" id="IPR007551">
    <property type="entry name" value="DUF520"/>
</dbReference>
<dbReference type="InterPro" id="IPR035571">
    <property type="entry name" value="UPF0234-like_C"/>
</dbReference>
<dbReference type="InterPro" id="IPR035570">
    <property type="entry name" value="UPF0234_N"/>
</dbReference>
<dbReference type="InterPro" id="IPR036183">
    <property type="entry name" value="YajQ-like_sf"/>
</dbReference>
<dbReference type="NCBIfam" id="NF003819">
    <property type="entry name" value="PRK05412.1"/>
    <property type="match status" value="1"/>
</dbReference>
<dbReference type="PANTHER" id="PTHR30476">
    <property type="entry name" value="UPF0234 PROTEIN YAJQ"/>
    <property type="match status" value="1"/>
</dbReference>
<dbReference type="PANTHER" id="PTHR30476:SF0">
    <property type="entry name" value="UPF0234 PROTEIN YAJQ"/>
    <property type="match status" value="1"/>
</dbReference>
<dbReference type="Pfam" id="PF04461">
    <property type="entry name" value="DUF520"/>
    <property type="match status" value="1"/>
</dbReference>
<dbReference type="SUPFAM" id="SSF89963">
    <property type="entry name" value="YajQ-like"/>
    <property type="match status" value="2"/>
</dbReference>
<feature type="chain" id="PRO_0000261967" description="Nucleotide-binding protein RHA1_ro01989">
    <location>
        <begin position="1"/>
        <end position="163"/>
    </location>
</feature>
<accession>Q0SF90</accession>
<comment type="function">
    <text evidence="1">Nucleotide-binding protein.</text>
</comment>
<comment type="similarity">
    <text evidence="1">Belongs to the YajQ family.</text>
</comment>
<sequence length="163" mass="18076">MADSSFDVVSKVERQEVDNALHQAGKELSTRFDFRNTGASIEWSGEETITLTADTEERLLAALDVFKEKLIRRDISLKAFDAGEPAQSGKIYKLSGSLVQGITTENAKKITKKIRDEGPKGVKAQIQGDELRVSSKKRDDLQAVISLLKGEDFGIALQFVNYR</sequence>
<organism>
    <name type="scientific">Rhodococcus jostii (strain RHA1)</name>
    <dbReference type="NCBI Taxonomy" id="101510"/>
    <lineage>
        <taxon>Bacteria</taxon>
        <taxon>Bacillati</taxon>
        <taxon>Actinomycetota</taxon>
        <taxon>Actinomycetes</taxon>
        <taxon>Mycobacteriales</taxon>
        <taxon>Nocardiaceae</taxon>
        <taxon>Rhodococcus</taxon>
    </lineage>
</organism>
<protein>
    <recommendedName>
        <fullName evidence="1">Nucleotide-binding protein RHA1_ro01989</fullName>
    </recommendedName>
</protein>
<reference key="1">
    <citation type="journal article" date="2006" name="Proc. Natl. Acad. Sci. U.S.A.">
        <title>The complete genome of Rhodococcus sp. RHA1 provides insights into a catabolic powerhouse.</title>
        <authorList>
            <person name="McLeod M.P."/>
            <person name="Warren R.L."/>
            <person name="Hsiao W.W.L."/>
            <person name="Araki N."/>
            <person name="Myhre M."/>
            <person name="Fernandes C."/>
            <person name="Miyazawa D."/>
            <person name="Wong W."/>
            <person name="Lillquist A.L."/>
            <person name="Wang D."/>
            <person name="Dosanjh M."/>
            <person name="Hara H."/>
            <person name="Petrescu A."/>
            <person name="Morin R.D."/>
            <person name="Yang G."/>
            <person name="Stott J.M."/>
            <person name="Schein J.E."/>
            <person name="Shin H."/>
            <person name="Smailus D."/>
            <person name="Siddiqui A.S."/>
            <person name="Marra M.A."/>
            <person name="Jones S.J.M."/>
            <person name="Holt R."/>
            <person name="Brinkman F.S.L."/>
            <person name="Miyauchi K."/>
            <person name="Fukuda M."/>
            <person name="Davies J.E."/>
            <person name="Mohn W.W."/>
            <person name="Eltis L.D."/>
        </authorList>
    </citation>
    <scope>NUCLEOTIDE SEQUENCE [LARGE SCALE GENOMIC DNA]</scope>
    <source>
        <strain>RHA1</strain>
    </source>
</reference>
<name>Y1989_RHOJR</name>
<keyword id="KW-0547">Nucleotide-binding</keyword>
<gene>
    <name type="ordered locus">RHA1_ro01989</name>
</gene>
<evidence type="ECO:0000255" key="1">
    <source>
        <dbReference type="HAMAP-Rule" id="MF_00632"/>
    </source>
</evidence>
<proteinExistence type="inferred from homology"/>